<comment type="function">
    <text evidence="1">Binds to tRNA and functions as a cofactor for the methionyl-tRNA synthetase (MetRS) and glutamyl-tRNA synthetase (GluRS). Forms a complex with MetRS and GluRS and increases their affinity for cognate tRNAs due to the presence of a tRNA binding domain in its middle and C-terminal part (By similarity).</text>
</comment>
<comment type="subunit">
    <text evidence="1">Component of a yeast aminoacyl-tRNA synthase (aaRS) complex formed by methionyl-tRNA synthase, glutamyl-tRNA synthase and the tRNA aminoacylation cofactor arc1 in a stoichiometric complex. Interacts with rar1/mes1 and gus1 (By similarity).</text>
</comment>
<comment type="subcellular location">
    <subcellularLocation>
        <location>Cytoplasm</location>
    </subcellularLocation>
</comment>
<comment type="similarity">
    <text evidence="4">Belongs to the tRNA-aminoacylation cofactor ARC1 family.</text>
</comment>
<keyword id="KW-0963">Cytoplasm</keyword>
<keyword id="KW-1185">Reference proteome</keyword>
<keyword id="KW-0694">RNA-binding</keyword>
<keyword id="KW-0820">tRNA-binding</keyword>
<reference key="1">
    <citation type="journal article" date="2002" name="Nature">
        <title>The genome sequence of Schizosaccharomyces pombe.</title>
        <authorList>
            <person name="Wood V."/>
            <person name="Gwilliam R."/>
            <person name="Rajandream M.A."/>
            <person name="Lyne M.H."/>
            <person name="Lyne R."/>
            <person name="Stewart A."/>
            <person name="Sgouros J.G."/>
            <person name="Peat N."/>
            <person name="Hayles J."/>
            <person name="Baker S.G."/>
            <person name="Basham D."/>
            <person name="Bowman S."/>
            <person name="Brooks K."/>
            <person name="Brown D."/>
            <person name="Brown S."/>
            <person name="Chillingworth T."/>
            <person name="Churcher C.M."/>
            <person name="Collins M."/>
            <person name="Connor R."/>
            <person name="Cronin A."/>
            <person name="Davis P."/>
            <person name="Feltwell T."/>
            <person name="Fraser A."/>
            <person name="Gentles S."/>
            <person name="Goble A."/>
            <person name="Hamlin N."/>
            <person name="Harris D.E."/>
            <person name="Hidalgo J."/>
            <person name="Hodgson G."/>
            <person name="Holroyd S."/>
            <person name="Hornsby T."/>
            <person name="Howarth S."/>
            <person name="Huckle E.J."/>
            <person name="Hunt S."/>
            <person name="Jagels K."/>
            <person name="James K.D."/>
            <person name="Jones L."/>
            <person name="Jones M."/>
            <person name="Leather S."/>
            <person name="McDonald S."/>
            <person name="McLean J."/>
            <person name="Mooney P."/>
            <person name="Moule S."/>
            <person name="Mungall K.L."/>
            <person name="Murphy L.D."/>
            <person name="Niblett D."/>
            <person name="Odell C."/>
            <person name="Oliver K."/>
            <person name="O'Neil S."/>
            <person name="Pearson D."/>
            <person name="Quail M.A."/>
            <person name="Rabbinowitsch E."/>
            <person name="Rutherford K.M."/>
            <person name="Rutter S."/>
            <person name="Saunders D."/>
            <person name="Seeger K."/>
            <person name="Sharp S."/>
            <person name="Skelton J."/>
            <person name="Simmonds M.N."/>
            <person name="Squares R."/>
            <person name="Squares S."/>
            <person name="Stevens K."/>
            <person name="Taylor K."/>
            <person name="Taylor R.G."/>
            <person name="Tivey A."/>
            <person name="Walsh S.V."/>
            <person name="Warren T."/>
            <person name="Whitehead S."/>
            <person name="Woodward J.R."/>
            <person name="Volckaert G."/>
            <person name="Aert R."/>
            <person name="Robben J."/>
            <person name="Grymonprez B."/>
            <person name="Weltjens I."/>
            <person name="Vanstreels E."/>
            <person name="Rieger M."/>
            <person name="Schaefer M."/>
            <person name="Mueller-Auer S."/>
            <person name="Gabel C."/>
            <person name="Fuchs M."/>
            <person name="Duesterhoeft A."/>
            <person name="Fritzc C."/>
            <person name="Holzer E."/>
            <person name="Moestl D."/>
            <person name="Hilbert H."/>
            <person name="Borzym K."/>
            <person name="Langer I."/>
            <person name="Beck A."/>
            <person name="Lehrach H."/>
            <person name="Reinhardt R."/>
            <person name="Pohl T.M."/>
            <person name="Eger P."/>
            <person name="Zimmermann W."/>
            <person name="Wedler H."/>
            <person name="Wambutt R."/>
            <person name="Purnelle B."/>
            <person name="Goffeau A."/>
            <person name="Cadieu E."/>
            <person name="Dreano S."/>
            <person name="Gloux S."/>
            <person name="Lelaure V."/>
            <person name="Mottier S."/>
            <person name="Galibert F."/>
            <person name="Aves S.J."/>
            <person name="Xiang Z."/>
            <person name="Hunt C."/>
            <person name="Moore K."/>
            <person name="Hurst S.M."/>
            <person name="Lucas M."/>
            <person name="Rochet M."/>
            <person name="Gaillardin C."/>
            <person name="Tallada V.A."/>
            <person name="Garzon A."/>
            <person name="Thode G."/>
            <person name="Daga R.R."/>
            <person name="Cruzado L."/>
            <person name="Jimenez J."/>
            <person name="Sanchez M."/>
            <person name="del Rey F."/>
            <person name="Benito J."/>
            <person name="Dominguez A."/>
            <person name="Revuelta J.L."/>
            <person name="Moreno S."/>
            <person name="Armstrong J."/>
            <person name="Forsburg S.L."/>
            <person name="Cerutti L."/>
            <person name="Lowe T."/>
            <person name="McCombie W.R."/>
            <person name="Paulsen I."/>
            <person name="Potashkin J."/>
            <person name="Shpakovski G.V."/>
            <person name="Ussery D."/>
            <person name="Barrell B.G."/>
            <person name="Nurse P."/>
        </authorList>
    </citation>
    <scope>NUCLEOTIDE SEQUENCE [LARGE SCALE GENOMIC DNA]</scope>
    <source>
        <strain>972 / ATCC 24843</strain>
    </source>
</reference>
<sequence>MSFLWAKEFCVLKYPYKLFITHKFSYLLRFETVTLNNIRSPQFYAKLTFSHHQPTVSGTMSTELKFISKYLQISIPETKEGPVSSLFKAVSEQKPELLGNTDFEKAQILEWTTKAFSPIETQSIVEQLDEFLKSSTFIAQDSGISVADLAVYARIHSYICGLSAKEGYKLNNVCRWFDFIQHQESVMEAANSMSMKLANIDLNAPKIQRPSVIKKDKKEKKEGKPSQEASVKSVEKAPKGLEGAKKEKQNKKEKKDKKDKKDKKEKAPKEPPKAATPVPSMIDFRIGFIEKAVKHPNADSLYVSTIHCGDAEGPRTVCSGLVKYIPLEQMQQRKVIVVANLKPVNMRSVKSQAMVFCASSPDKSVVEFVLPPENAEIGDRLTFEGFDTEEPEAQLNPKRKIWEAIQPGFTSGEDLICGYKDESGLHRLFVKGKKDLGFCKAQTVVNGTLS</sequence>
<protein>
    <recommendedName>
        <fullName>tRNA-aminoacylation cofactor arc1</fullName>
    </recommendedName>
</protein>
<accession>Q9P6K7</accession>
<dbReference type="EMBL" id="CU329670">
    <property type="protein sequence ID" value="CAB90791.1"/>
    <property type="molecule type" value="Genomic_DNA"/>
</dbReference>
<dbReference type="SMR" id="Q9P6K7"/>
<dbReference type="BioGRID" id="279520">
    <property type="interactions" value="58"/>
</dbReference>
<dbReference type="FunCoup" id="Q9P6K7">
    <property type="interactions" value="26"/>
</dbReference>
<dbReference type="STRING" id="284812.Q9P6K7"/>
<dbReference type="iPTMnet" id="Q9P6K7"/>
<dbReference type="PaxDb" id="4896-SPAC30C2.04.1"/>
<dbReference type="EnsemblFungi" id="SPAC30C2.04.1">
    <property type="protein sequence ID" value="SPAC30C2.04.1:pep"/>
    <property type="gene ID" value="SPAC30C2.04"/>
</dbReference>
<dbReference type="KEGG" id="spo:2543087"/>
<dbReference type="PomBase" id="SPAC30C2.04"/>
<dbReference type="VEuPathDB" id="FungiDB:SPAC30C2.04"/>
<dbReference type="eggNOG" id="KOG2241">
    <property type="taxonomic scope" value="Eukaryota"/>
</dbReference>
<dbReference type="HOGENOM" id="CLU_009710_6_6_1"/>
<dbReference type="InParanoid" id="Q9P6K7"/>
<dbReference type="OMA" id="QVCRTVC"/>
<dbReference type="PhylomeDB" id="Q9P6K7"/>
<dbReference type="PRO" id="PR:Q9P6K7"/>
<dbReference type="Proteomes" id="UP000002485">
    <property type="component" value="Chromosome I"/>
</dbReference>
<dbReference type="GO" id="GO:0010494">
    <property type="term" value="C:cytoplasmic stress granule"/>
    <property type="evidence" value="ECO:0000269"/>
    <property type="project" value="PomBase"/>
</dbReference>
<dbReference type="GO" id="GO:0016282">
    <property type="term" value="C:eukaryotic 43S preinitiation complex"/>
    <property type="evidence" value="ECO:0000314"/>
    <property type="project" value="PomBase"/>
</dbReference>
<dbReference type="GO" id="GO:0017102">
    <property type="term" value="C:methionyl glutamyl tRNA synthetase complex"/>
    <property type="evidence" value="ECO:0000353"/>
    <property type="project" value="PomBase"/>
</dbReference>
<dbReference type="GO" id="GO:0000049">
    <property type="term" value="F:tRNA binding"/>
    <property type="evidence" value="ECO:0000266"/>
    <property type="project" value="PomBase"/>
</dbReference>
<dbReference type="GO" id="GO:0001731">
    <property type="term" value="P:formation of translation preinitiation complex"/>
    <property type="evidence" value="ECO:0000315"/>
    <property type="project" value="PomBase"/>
</dbReference>
<dbReference type="GO" id="GO:0006418">
    <property type="term" value="P:tRNA aminoacylation for protein translation"/>
    <property type="evidence" value="ECO:0000266"/>
    <property type="project" value="PomBase"/>
</dbReference>
<dbReference type="CDD" id="cd10289">
    <property type="entry name" value="GST_C_AaRS_like"/>
    <property type="match status" value="1"/>
</dbReference>
<dbReference type="CDD" id="cd02799">
    <property type="entry name" value="tRNA_bind_EMAP-II_like"/>
    <property type="match status" value="1"/>
</dbReference>
<dbReference type="Gene3D" id="1.20.1050.130">
    <property type="match status" value="1"/>
</dbReference>
<dbReference type="Gene3D" id="2.40.50.140">
    <property type="entry name" value="Nucleic acid-binding proteins"/>
    <property type="match status" value="1"/>
</dbReference>
<dbReference type="InterPro" id="IPR053836">
    <property type="entry name" value="Arc1-like_N"/>
</dbReference>
<dbReference type="InterPro" id="IPR036282">
    <property type="entry name" value="Glutathione-S-Trfase_C_sf"/>
</dbReference>
<dbReference type="InterPro" id="IPR012340">
    <property type="entry name" value="NA-bd_OB-fold"/>
</dbReference>
<dbReference type="InterPro" id="IPR002547">
    <property type="entry name" value="tRNA-bd_dom"/>
</dbReference>
<dbReference type="InterPro" id="IPR051270">
    <property type="entry name" value="Tyrosine-tRNA_ligase_regulator"/>
</dbReference>
<dbReference type="PANTHER" id="PTHR11586:SF33">
    <property type="entry name" value="AMINOACYL TRNA SYNTHASE COMPLEX-INTERACTING MULTIFUNCTIONAL PROTEIN 1"/>
    <property type="match status" value="1"/>
</dbReference>
<dbReference type="PANTHER" id="PTHR11586">
    <property type="entry name" value="TRNA-AMINOACYLATION COFACTOR ARC1 FAMILY MEMBER"/>
    <property type="match status" value="1"/>
</dbReference>
<dbReference type="Pfam" id="PF21972">
    <property type="entry name" value="Arc1p_N_like"/>
    <property type="match status" value="1"/>
</dbReference>
<dbReference type="Pfam" id="PF01588">
    <property type="entry name" value="tRNA_bind"/>
    <property type="match status" value="1"/>
</dbReference>
<dbReference type="SUPFAM" id="SSF47616">
    <property type="entry name" value="GST C-terminal domain-like"/>
    <property type="match status" value="1"/>
</dbReference>
<dbReference type="SUPFAM" id="SSF50249">
    <property type="entry name" value="Nucleic acid-binding proteins"/>
    <property type="match status" value="1"/>
</dbReference>
<dbReference type="PROSITE" id="PS50886">
    <property type="entry name" value="TRBD"/>
    <property type="match status" value="1"/>
</dbReference>
<evidence type="ECO:0000250" key="1"/>
<evidence type="ECO:0000255" key="2">
    <source>
        <dbReference type="PROSITE-ProRule" id="PRU00209"/>
    </source>
</evidence>
<evidence type="ECO:0000256" key="3">
    <source>
        <dbReference type="SAM" id="MobiDB-lite"/>
    </source>
</evidence>
<evidence type="ECO:0000305" key="4"/>
<proteinExistence type="inferred from homology"/>
<organism>
    <name type="scientific">Schizosaccharomyces pombe (strain 972 / ATCC 24843)</name>
    <name type="common">Fission yeast</name>
    <dbReference type="NCBI Taxonomy" id="284812"/>
    <lineage>
        <taxon>Eukaryota</taxon>
        <taxon>Fungi</taxon>
        <taxon>Dikarya</taxon>
        <taxon>Ascomycota</taxon>
        <taxon>Taphrinomycotina</taxon>
        <taxon>Schizosaccharomycetes</taxon>
        <taxon>Schizosaccharomycetales</taxon>
        <taxon>Schizosaccharomycetaceae</taxon>
        <taxon>Schizosaccharomyces</taxon>
    </lineage>
</organism>
<name>ARC1_SCHPO</name>
<gene>
    <name type="ORF">SPAC30C2.04</name>
</gene>
<feature type="chain" id="PRO_0000317099" description="tRNA-aminoacylation cofactor arc1">
    <location>
        <begin position="1"/>
        <end position="450"/>
    </location>
</feature>
<feature type="domain" description="tRNA-binding" evidence="2">
    <location>
        <begin position="278"/>
        <end position="382"/>
    </location>
</feature>
<feature type="region of interest" description="Disordered" evidence="3">
    <location>
        <begin position="208"/>
        <end position="278"/>
    </location>
</feature>
<feature type="compositionally biased region" description="Basic and acidic residues" evidence="3">
    <location>
        <begin position="213"/>
        <end position="225"/>
    </location>
</feature>
<feature type="compositionally biased region" description="Basic and acidic residues" evidence="3">
    <location>
        <begin position="233"/>
        <end position="247"/>
    </location>
</feature>
<feature type="compositionally biased region" description="Basic residues" evidence="3">
    <location>
        <begin position="248"/>
        <end position="261"/>
    </location>
</feature>
<feature type="compositionally biased region" description="Basic and acidic residues" evidence="3">
    <location>
        <begin position="262"/>
        <end position="272"/>
    </location>
</feature>